<comment type="function">
    <text evidence="1">Catalyzes the condensation of isopentenyl diphosphate (IPP) with allylic pyrophosphates generating different type of terpenoids.</text>
</comment>
<comment type="cofactor">
    <cofactor evidence="1">
        <name>Mg(2+)</name>
        <dbReference type="ChEBI" id="CHEBI:18420"/>
    </cofactor>
    <text evidence="1">Binds 2 magnesium ions per subunit.</text>
</comment>
<comment type="subunit">
    <text evidence="1">Homodimer.</text>
</comment>
<comment type="similarity">
    <text evidence="1">Belongs to the UPP synthase family.</text>
</comment>
<organism>
    <name type="scientific">Tropheryma whipplei (strain Twist)</name>
    <name type="common">Whipple's bacillus</name>
    <dbReference type="NCBI Taxonomy" id="203267"/>
    <lineage>
        <taxon>Bacteria</taxon>
        <taxon>Bacillati</taxon>
        <taxon>Actinomycetota</taxon>
        <taxon>Actinomycetes</taxon>
        <taxon>Micrococcales</taxon>
        <taxon>Tropherymataceae</taxon>
        <taxon>Tropheryma</taxon>
    </lineage>
</organism>
<name>ISPT1_TROWT</name>
<dbReference type="EC" id="2.5.1.-" evidence="1"/>
<dbReference type="EMBL" id="AE014184">
    <property type="protein sequence ID" value="AAO44383.1"/>
    <property type="molecule type" value="Genomic_DNA"/>
</dbReference>
<dbReference type="RefSeq" id="WP_011096433.1">
    <property type="nucleotide sequence ID" value="NC_004572.3"/>
</dbReference>
<dbReference type="SMR" id="Q83GJ0"/>
<dbReference type="STRING" id="203267.TWT_286"/>
<dbReference type="KEGG" id="twh:TWT_286"/>
<dbReference type="eggNOG" id="COG0020">
    <property type="taxonomic scope" value="Bacteria"/>
</dbReference>
<dbReference type="HOGENOM" id="CLU_038505_1_2_11"/>
<dbReference type="OrthoDB" id="4191603at2"/>
<dbReference type="Proteomes" id="UP000002200">
    <property type="component" value="Chromosome"/>
</dbReference>
<dbReference type="GO" id="GO:0005829">
    <property type="term" value="C:cytosol"/>
    <property type="evidence" value="ECO:0007669"/>
    <property type="project" value="TreeGrafter"/>
</dbReference>
<dbReference type="GO" id="GO:0005886">
    <property type="term" value="C:plasma membrane"/>
    <property type="evidence" value="ECO:0007669"/>
    <property type="project" value="TreeGrafter"/>
</dbReference>
<dbReference type="GO" id="GO:0008834">
    <property type="term" value="F:ditrans,polycis-undecaprenyl-diphosphate synthase [(2E,6E)-farnesyl-diphosphate specific] activity"/>
    <property type="evidence" value="ECO:0007669"/>
    <property type="project" value="TreeGrafter"/>
</dbReference>
<dbReference type="GO" id="GO:0000287">
    <property type="term" value="F:magnesium ion binding"/>
    <property type="evidence" value="ECO:0007669"/>
    <property type="project" value="UniProtKB-UniRule"/>
</dbReference>
<dbReference type="GO" id="GO:0030145">
    <property type="term" value="F:manganese ion binding"/>
    <property type="evidence" value="ECO:0007669"/>
    <property type="project" value="TreeGrafter"/>
</dbReference>
<dbReference type="GO" id="GO:0033850">
    <property type="term" value="F:Z-farnesyl diphosphate synthase activity"/>
    <property type="evidence" value="ECO:0007669"/>
    <property type="project" value="TreeGrafter"/>
</dbReference>
<dbReference type="GO" id="GO:0016094">
    <property type="term" value="P:polyprenol biosynthetic process"/>
    <property type="evidence" value="ECO:0007669"/>
    <property type="project" value="TreeGrafter"/>
</dbReference>
<dbReference type="CDD" id="cd00475">
    <property type="entry name" value="Cis_IPPS"/>
    <property type="match status" value="1"/>
</dbReference>
<dbReference type="Gene3D" id="3.40.1180.10">
    <property type="entry name" value="Decaprenyl diphosphate synthase-like"/>
    <property type="match status" value="1"/>
</dbReference>
<dbReference type="HAMAP" id="MF_01139">
    <property type="entry name" value="ISPT"/>
    <property type="match status" value="1"/>
</dbReference>
<dbReference type="InterPro" id="IPR001441">
    <property type="entry name" value="UPP_synth-like"/>
</dbReference>
<dbReference type="InterPro" id="IPR018520">
    <property type="entry name" value="UPP_synth-like_CS"/>
</dbReference>
<dbReference type="InterPro" id="IPR036424">
    <property type="entry name" value="UPP_synth-like_sf"/>
</dbReference>
<dbReference type="NCBIfam" id="NF011404">
    <property type="entry name" value="PRK14829.1"/>
    <property type="match status" value="1"/>
</dbReference>
<dbReference type="NCBIfam" id="TIGR00055">
    <property type="entry name" value="uppS"/>
    <property type="match status" value="1"/>
</dbReference>
<dbReference type="PANTHER" id="PTHR10291:SF0">
    <property type="entry name" value="DEHYDRODOLICHYL DIPHOSPHATE SYNTHASE 2"/>
    <property type="match status" value="1"/>
</dbReference>
<dbReference type="PANTHER" id="PTHR10291">
    <property type="entry name" value="DEHYDRODOLICHYL DIPHOSPHATE SYNTHASE FAMILY MEMBER"/>
    <property type="match status" value="1"/>
</dbReference>
<dbReference type="Pfam" id="PF01255">
    <property type="entry name" value="Prenyltransf"/>
    <property type="match status" value="1"/>
</dbReference>
<dbReference type="SUPFAM" id="SSF64005">
    <property type="entry name" value="Undecaprenyl diphosphate synthase"/>
    <property type="match status" value="1"/>
</dbReference>
<dbReference type="PROSITE" id="PS01066">
    <property type="entry name" value="UPP_SYNTHASE"/>
    <property type="match status" value="1"/>
</dbReference>
<keyword id="KW-0460">Magnesium</keyword>
<keyword id="KW-0479">Metal-binding</keyword>
<keyword id="KW-1185">Reference proteome</keyword>
<keyword id="KW-0808">Transferase</keyword>
<gene>
    <name evidence="1" type="primary">uppS1</name>
    <name type="ordered locus">TWT_286</name>
</gene>
<proteinExistence type="inferred from homology"/>
<sequence>MEIFSVDWTGQTPPHIPRKSLPRHVAVVMDGNGRWANQRNLPRIEGHKAGESALIDVVAGAVQVGVPYLSLYVFSTENWLRAPDEVRFLLRFTRDVIARRRELFAHWGVRVRWSGVPNRLGKVLVKELRDTEEITKKNTAMNLNVCLNYGSRQEIVNAIKSIVSDVNSGLISAKSVNEKIISRRMYMPDFPDVDLFLRSSGENRMSNFMLWQSAYAELIFMSKLWPDFRRDDFWAALRAYSGRSRRFGR</sequence>
<accession>Q83GJ0</accession>
<reference key="1">
    <citation type="journal article" date="2003" name="Genome Res.">
        <title>Tropheryma whipplei twist: a human pathogenic Actinobacteria with a reduced genome.</title>
        <authorList>
            <person name="Raoult D."/>
            <person name="Ogata H."/>
            <person name="Audic S."/>
            <person name="Robert C."/>
            <person name="Suhre K."/>
            <person name="Drancourt M."/>
            <person name="Claverie J.-M."/>
        </authorList>
    </citation>
    <scope>NUCLEOTIDE SEQUENCE [LARGE SCALE GENOMIC DNA]</scope>
    <source>
        <strain>Twist</strain>
    </source>
</reference>
<feature type="chain" id="PRO_0000123709" description="Isoprenyl transferase 1">
    <location>
        <begin position="1"/>
        <end position="249"/>
    </location>
</feature>
<feature type="active site" evidence="1">
    <location>
        <position position="30"/>
    </location>
</feature>
<feature type="active site" description="Proton acceptor" evidence="1">
    <location>
        <position position="78"/>
    </location>
</feature>
<feature type="binding site" evidence="1">
    <location>
        <position position="30"/>
    </location>
    <ligand>
        <name>Mg(2+)</name>
        <dbReference type="ChEBI" id="CHEBI:18420"/>
    </ligand>
</feature>
<feature type="binding site" evidence="1">
    <location>
        <begin position="31"/>
        <end position="34"/>
    </location>
    <ligand>
        <name>substrate</name>
    </ligand>
</feature>
<feature type="binding site" evidence="1">
    <location>
        <position position="35"/>
    </location>
    <ligand>
        <name>substrate</name>
    </ligand>
</feature>
<feature type="binding site" evidence="1">
    <location>
        <position position="43"/>
    </location>
    <ligand>
        <name>substrate</name>
    </ligand>
</feature>
<feature type="binding site" evidence="1">
    <location>
        <position position="47"/>
    </location>
    <ligand>
        <name>substrate</name>
    </ligand>
</feature>
<feature type="binding site" evidence="1">
    <location>
        <begin position="75"/>
        <end position="77"/>
    </location>
    <ligand>
        <name>substrate</name>
    </ligand>
</feature>
<feature type="binding site" evidence="1">
    <location>
        <position position="79"/>
    </location>
    <ligand>
        <name>substrate</name>
    </ligand>
</feature>
<feature type="binding site" evidence="1">
    <location>
        <position position="81"/>
    </location>
    <ligand>
        <name>substrate</name>
    </ligand>
</feature>
<feature type="binding site" evidence="1">
    <location>
        <position position="198"/>
    </location>
    <ligand>
        <name>substrate</name>
    </ligand>
</feature>
<feature type="binding site" evidence="1">
    <location>
        <begin position="204"/>
        <end position="206"/>
    </location>
    <ligand>
        <name>substrate</name>
    </ligand>
</feature>
<feature type="binding site" evidence="1">
    <location>
        <position position="217"/>
    </location>
    <ligand>
        <name>Mg(2+)</name>
        <dbReference type="ChEBI" id="CHEBI:18420"/>
    </ligand>
</feature>
<protein>
    <recommendedName>
        <fullName evidence="1">Isoprenyl transferase 1</fullName>
        <ecNumber evidence="1">2.5.1.-</ecNumber>
    </recommendedName>
</protein>
<evidence type="ECO:0000255" key="1">
    <source>
        <dbReference type="HAMAP-Rule" id="MF_01139"/>
    </source>
</evidence>